<sequence>MSNTIKMVVGLGNPGKEYEQTRHNAGFWFLDELAWKWKASFKEEKKFFGEVARAALPDGDVWLLKPATFMNRSGQAVAALAQFYKIKPEEILVVHDELDIPCGRIKFKLGGGNGGHNGLKDIQAKLGTADYYRLRLGIGHPGDRNLVVGYVLNKPSAEHRRQIDDAVAKSLQAVPDIISGKWEEATRFLHSK</sequence>
<reference key="1">
    <citation type="journal article" date="2008" name="J. Bacteriol.">
        <title>Complete genome sequence of Neisseria gonorrhoeae NCCP11945.</title>
        <authorList>
            <person name="Chung G.T."/>
            <person name="Yoo J.S."/>
            <person name="Oh H.B."/>
            <person name="Lee Y.S."/>
            <person name="Cha S.H."/>
            <person name="Kim S.J."/>
            <person name="Yoo C.K."/>
        </authorList>
    </citation>
    <scope>NUCLEOTIDE SEQUENCE [LARGE SCALE GENOMIC DNA]</scope>
    <source>
        <strain>NCCP11945</strain>
    </source>
</reference>
<reference evidence="3" key="2">
    <citation type="journal article" date="2022" name="Org. Lett.">
        <title>Synthesis of a Thiazole Library via an Iridium-Catalyzed Sulfur Ylide Insertion Reaction.</title>
        <authorList>
            <person name="Hassell-Hart S."/>
            <person name="Speranzini E."/>
            <person name="Srikwanjai S."/>
            <person name="Hossack E."/>
            <person name="Roe S.M."/>
            <person name="Fearon D."/>
            <person name="Akinbosede D."/>
            <person name="Hare S."/>
            <person name="Spencer J."/>
        </authorList>
    </citation>
    <scope>X-RAY CRYSTALLOGRAPHY (1.83 ANGSTROMS)</scope>
    <scope>SUBUNIT</scope>
    <source>
        <strain>NCCP11945</strain>
    </source>
</reference>
<evidence type="ECO:0000255" key="1">
    <source>
        <dbReference type="HAMAP-Rule" id="MF_00083"/>
    </source>
</evidence>
<evidence type="ECO:0000269" key="2">
    <source>
    </source>
</evidence>
<evidence type="ECO:0007744" key="3">
    <source>
        <dbReference type="PDB" id="8AXP"/>
    </source>
</evidence>
<evidence type="ECO:0007829" key="4">
    <source>
        <dbReference type="PDB" id="8AXP"/>
    </source>
</evidence>
<feature type="chain" id="PRO_1000092962" description="Peptidyl-tRNA hydrolase">
    <location>
        <begin position="1"/>
        <end position="192"/>
    </location>
</feature>
<feature type="active site" description="Proton acceptor" evidence="1">
    <location>
        <position position="23"/>
    </location>
</feature>
<feature type="binding site" evidence="1">
    <location>
        <position position="18"/>
    </location>
    <ligand>
        <name>tRNA</name>
        <dbReference type="ChEBI" id="CHEBI:17843"/>
    </ligand>
</feature>
<feature type="binding site" evidence="1">
    <location>
        <position position="69"/>
    </location>
    <ligand>
        <name>tRNA</name>
        <dbReference type="ChEBI" id="CHEBI:17843"/>
    </ligand>
</feature>
<feature type="binding site" evidence="1">
    <location>
        <position position="71"/>
    </location>
    <ligand>
        <name>tRNA</name>
        <dbReference type="ChEBI" id="CHEBI:17843"/>
    </ligand>
</feature>
<feature type="binding site" evidence="1">
    <location>
        <position position="117"/>
    </location>
    <ligand>
        <name>tRNA</name>
        <dbReference type="ChEBI" id="CHEBI:17843"/>
    </ligand>
</feature>
<feature type="site" description="Discriminates between blocked and unblocked aminoacyl-tRNA" evidence="1">
    <location>
        <position position="13"/>
    </location>
</feature>
<feature type="site" description="Stabilizes the basic form of H active site to accept a proton" evidence="1">
    <location>
        <position position="96"/>
    </location>
</feature>
<feature type="strand" evidence="4">
    <location>
        <begin position="7"/>
        <end position="10"/>
    </location>
</feature>
<feature type="helix" evidence="4">
    <location>
        <begin position="22"/>
        <end position="24"/>
    </location>
</feature>
<feature type="helix" evidence="4">
    <location>
        <begin position="25"/>
        <end position="36"/>
    </location>
</feature>
<feature type="strand" evidence="4">
    <location>
        <begin position="42"/>
        <end position="44"/>
    </location>
</feature>
<feature type="turn" evidence="4">
    <location>
        <begin position="45"/>
        <end position="48"/>
    </location>
</feature>
<feature type="strand" evidence="4">
    <location>
        <begin position="49"/>
        <end position="54"/>
    </location>
</feature>
<feature type="strand" evidence="4">
    <location>
        <begin position="61"/>
        <end position="66"/>
    </location>
</feature>
<feature type="helix" evidence="4">
    <location>
        <begin position="70"/>
        <end position="72"/>
    </location>
</feature>
<feature type="helix" evidence="4">
    <location>
        <begin position="73"/>
        <end position="83"/>
    </location>
</feature>
<feature type="helix" evidence="4">
    <location>
        <begin position="88"/>
        <end position="90"/>
    </location>
</feature>
<feature type="strand" evidence="4">
    <location>
        <begin position="91"/>
        <end position="100"/>
    </location>
</feature>
<feature type="strand" evidence="4">
    <location>
        <begin position="106"/>
        <end position="110"/>
    </location>
</feature>
<feature type="helix" evidence="4">
    <location>
        <begin position="117"/>
        <end position="126"/>
    </location>
</feature>
<feature type="strand" evidence="4">
    <location>
        <begin position="131"/>
        <end position="137"/>
    </location>
</feature>
<feature type="helix" evidence="4">
    <location>
        <begin position="144"/>
        <end position="146"/>
    </location>
</feature>
<feature type="helix" evidence="4">
    <location>
        <begin position="147"/>
        <end position="151"/>
    </location>
</feature>
<feature type="helix" evidence="4">
    <location>
        <begin position="158"/>
        <end position="171"/>
    </location>
</feature>
<feature type="helix" evidence="4">
    <location>
        <begin position="174"/>
        <end position="179"/>
    </location>
</feature>
<feature type="helix" evidence="4">
    <location>
        <begin position="182"/>
        <end position="189"/>
    </location>
</feature>
<accession>B4RK78</accession>
<name>PTH_NEIG2</name>
<dbReference type="EC" id="3.1.1.29" evidence="1"/>
<dbReference type="EMBL" id="CP001050">
    <property type="protein sequence ID" value="ACF29229.1"/>
    <property type="molecule type" value="Genomic_DNA"/>
</dbReference>
<dbReference type="RefSeq" id="WP_003687802.1">
    <property type="nucleotide sequence ID" value="NC_011035.1"/>
</dbReference>
<dbReference type="PDB" id="8AXP">
    <property type="method" value="X-ray"/>
    <property type="resolution" value="1.83 A"/>
    <property type="chains" value="A/B=1-192"/>
</dbReference>
<dbReference type="PDBsum" id="8AXP"/>
<dbReference type="SMR" id="B4RK78"/>
<dbReference type="GeneID" id="66752718"/>
<dbReference type="KEGG" id="ngk:NGK_0538"/>
<dbReference type="HOGENOM" id="CLU_062456_3_1_4"/>
<dbReference type="Proteomes" id="UP000002564">
    <property type="component" value="Chromosome"/>
</dbReference>
<dbReference type="GO" id="GO:0005737">
    <property type="term" value="C:cytoplasm"/>
    <property type="evidence" value="ECO:0007669"/>
    <property type="project" value="UniProtKB-SubCell"/>
</dbReference>
<dbReference type="GO" id="GO:0004045">
    <property type="term" value="F:peptidyl-tRNA hydrolase activity"/>
    <property type="evidence" value="ECO:0007669"/>
    <property type="project" value="UniProtKB-UniRule"/>
</dbReference>
<dbReference type="GO" id="GO:0000049">
    <property type="term" value="F:tRNA binding"/>
    <property type="evidence" value="ECO:0007669"/>
    <property type="project" value="UniProtKB-UniRule"/>
</dbReference>
<dbReference type="GO" id="GO:0006515">
    <property type="term" value="P:protein quality control for misfolded or incompletely synthesized proteins"/>
    <property type="evidence" value="ECO:0007669"/>
    <property type="project" value="UniProtKB-UniRule"/>
</dbReference>
<dbReference type="GO" id="GO:0072344">
    <property type="term" value="P:rescue of stalled ribosome"/>
    <property type="evidence" value="ECO:0007669"/>
    <property type="project" value="UniProtKB-UniRule"/>
</dbReference>
<dbReference type="CDD" id="cd00462">
    <property type="entry name" value="PTH"/>
    <property type="match status" value="1"/>
</dbReference>
<dbReference type="FunFam" id="3.40.50.1470:FF:000001">
    <property type="entry name" value="Peptidyl-tRNA hydrolase"/>
    <property type="match status" value="1"/>
</dbReference>
<dbReference type="Gene3D" id="3.40.50.1470">
    <property type="entry name" value="Peptidyl-tRNA hydrolase"/>
    <property type="match status" value="1"/>
</dbReference>
<dbReference type="HAMAP" id="MF_00083">
    <property type="entry name" value="Pept_tRNA_hydro_bact"/>
    <property type="match status" value="1"/>
</dbReference>
<dbReference type="InterPro" id="IPR001328">
    <property type="entry name" value="Pept_tRNA_hydro"/>
</dbReference>
<dbReference type="InterPro" id="IPR018171">
    <property type="entry name" value="Pept_tRNA_hydro_CS"/>
</dbReference>
<dbReference type="InterPro" id="IPR036416">
    <property type="entry name" value="Pept_tRNA_hydro_sf"/>
</dbReference>
<dbReference type="NCBIfam" id="TIGR00447">
    <property type="entry name" value="pth"/>
    <property type="match status" value="1"/>
</dbReference>
<dbReference type="PANTHER" id="PTHR17224">
    <property type="entry name" value="PEPTIDYL-TRNA HYDROLASE"/>
    <property type="match status" value="1"/>
</dbReference>
<dbReference type="PANTHER" id="PTHR17224:SF1">
    <property type="entry name" value="PEPTIDYL-TRNA HYDROLASE"/>
    <property type="match status" value="1"/>
</dbReference>
<dbReference type="Pfam" id="PF01195">
    <property type="entry name" value="Pept_tRNA_hydro"/>
    <property type="match status" value="1"/>
</dbReference>
<dbReference type="SUPFAM" id="SSF53178">
    <property type="entry name" value="Peptidyl-tRNA hydrolase-like"/>
    <property type="match status" value="1"/>
</dbReference>
<dbReference type="PROSITE" id="PS01195">
    <property type="entry name" value="PEPT_TRNA_HYDROL_1"/>
    <property type="match status" value="1"/>
</dbReference>
<dbReference type="PROSITE" id="PS01196">
    <property type="entry name" value="PEPT_TRNA_HYDROL_2"/>
    <property type="match status" value="1"/>
</dbReference>
<comment type="function">
    <text evidence="1">Hydrolyzes ribosome-free peptidyl-tRNAs (with 1 or more amino acids incorporated), which drop off the ribosome during protein synthesis, or as a result of ribosome stalling.</text>
</comment>
<comment type="function">
    <text evidence="1">Catalyzes the release of premature peptidyl moieties from peptidyl-tRNA molecules trapped in stalled 50S ribosomal subunits, and thus maintains levels of free tRNAs and 50S ribosomes.</text>
</comment>
<comment type="catalytic activity">
    <reaction evidence="1">
        <text>an N-acyl-L-alpha-aminoacyl-tRNA + H2O = an N-acyl-L-amino acid + a tRNA + H(+)</text>
        <dbReference type="Rhea" id="RHEA:54448"/>
        <dbReference type="Rhea" id="RHEA-COMP:10123"/>
        <dbReference type="Rhea" id="RHEA-COMP:13883"/>
        <dbReference type="ChEBI" id="CHEBI:15377"/>
        <dbReference type="ChEBI" id="CHEBI:15378"/>
        <dbReference type="ChEBI" id="CHEBI:59874"/>
        <dbReference type="ChEBI" id="CHEBI:78442"/>
        <dbReference type="ChEBI" id="CHEBI:138191"/>
        <dbReference type="EC" id="3.1.1.29"/>
    </reaction>
</comment>
<comment type="subunit">
    <text evidence="1 2">Monomer.</text>
</comment>
<comment type="subcellular location">
    <subcellularLocation>
        <location evidence="1">Cytoplasm</location>
    </subcellularLocation>
</comment>
<comment type="similarity">
    <text evidence="1">Belongs to the PTH family.</text>
</comment>
<proteinExistence type="evidence at protein level"/>
<protein>
    <recommendedName>
        <fullName evidence="1">Peptidyl-tRNA hydrolase</fullName>
        <shortName evidence="1">Pth</shortName>
        <ecNumber evidence="1">3.1.1.29</ecNumber>
    </recommendedName>
</protein>
<organism>
    <name type="scientific">Neisseria gonorrhoeae (strain NCCP11945)</name>
    <dbReference type="NCBI Taxonomy" id="521006"/>
    <lineage>
        <taxon>Bacteria</taxon>
        <taxon>Pseudomonadati</taxon>
        <taxon>Pseudomonadota</taxon>
        <taxon>Betaproteobacteria</taxon>
        <taxon>Neisseriales</taxon>
        <taxon>Neisseriaceae</taxon>
        <taxon>Neisseria</taxon>
    </lineage>
</organism>
<keyword id="KW-0002">3D-structure</keyword>
<keyword id="KW-0963">Cytoplasm</keyword>
<keyword id="KW-0378">Hydrolase</keyword>
<keyword id="KW-0694">RNA-binding</keyword>
<keyword id="KW-0820">tRNA-binding</keyword>
<gene>
    <name evidence="1" type="primary">pth</name>
    <name type="ordered locus">NGK_0538</name>
</gene>